<sequence>MLFIELLKAIFFGVIEGVTEWLPISSTGHLILVQEFIRLHQDKAFMEMFNIVIQLGAIIAVIVIYFERLNPFQPGKSPQQIRLTWQLWLKVAIACIPSIIIAVPLDDWFDAHFNHMLPIAIALIVYGIAFLWIEKRNQTLEPRVVKLSRMSYKTAFFIGCFQVLSIIPGTSRSGATILGAIILGASRTVAADFTFFLAIPTMFGYSGLKALKFFIDGNHLTLSQLLVLLVASLTAFAVSLYVIKLLTDYVKKHDFTVFGRYRIVLGSLLIVYSVFKSLF</sequence>
<accession>C0M8J5</accession>
<organism>
    <name type="scientific">Streptococcus equi subsp. equi (strain 4047)</name>
    <dbReference type="NCBI Taxonomy" id="553482"/>
    <lineage>
        <taxon>Bacteria</taxon>
        <taxon>Bacillati</taxon>
        <taxon>Bacillota</taxon>
        <taxon>Bacilli</taxon>
        <taxon>Lactobacillales</taxon>
        <taxon>Streptococcaceae</taxon>
        <taxon>Streptococcus</taxon>
    </lineage>
</organism>
<protein>
    <recommendedName>
        <fullName evidence="1">Undecaprenyl-diphosphatase</fullName>
        <ecNumber evidence="1">3.6.1.27</ecNumber>
    </recommendedName>
    <alternativeName>
        <fullName evidence="1">Bacitracin resistance protein</fullName>
    </alternativeName>
    <alternativeName>
        <fullName evidence="1">Undecaprenyl pyrophosphate phosphatase</fullName>
    </alternativeName>
</protein>
<proteinExistence type="inferred from homology"/>
<feature type="chain" id="PRO_1000148827" description="Undecaprenyl-diphosphatase">
    <location>
        <begin position="1"/>
        <end position="279"/>
    </location>
</feature>
<feature type="transmembrane region" description="Helical" evidence="1">
    <location>
        <begin position="2"/>
        <end position="22"/>
    </location>
</feature>
<feature type="transmembrane region" description="Helical" evidence="1">
    <location>
        <begin position="44"/>
        <end position="64"/>
    </location>
</feature>
<feature type="transmembrane region" description="Helical" evidence="1">
    <location>
        <begin position="85"/>
        <end position="105"/>
    </location>
</feature>
<feature type="transmembrane region" description="Helical" evidence="1">
    <location>
        <begin position="113"/>
        <end position="133"/>
    </location>
</feature>
<feature type="transmembrane region" description="Helical" evidence="1">
    <location>
        <begin position="163"/>
        <end position="183"/>
    </location>
</feature>
<feature type="transmembrane region" description="Helical" evidence="1">
    <location>
        <begin position="188"/>
        <end position="208"/>
    </location>
</feature>
<feature type="transmembrane region" description="Helical" evidence="1">
    <location>
        <begin position="225"/>
        <end position="245"/>
    </location>
</feature>
<feature type="transmembrane region" description="Helical" evidence="1">
    <location>
        <begin position="255"/>
        <end position="275"/>
    </location>
</feature>
<name>UPPP_STRE4</name>
<keyword id="KW-0046">Antibiotic resistance</keyword>
<keyword id="KW-1003">Cell membrane</keyword>
<keyword id="KW-0133">Cell shape</keyword>
<keyword id="KW-0961">Cell wall biogenesis/degradation</keyword>
<keyword id="KW-0378">Hydrolase</keyword>
<keyword id="KW-0472">Membrane</keyword>
<keyword id="KW-0573">Peptidoglycan synthesis</keyword>
<keyword id="KW-0812">Transmembrane</keyword>
<keyword id="KW-1133">Transmembrane helix</keyword>
<comment type="function">
    <text evidence="1">Catalyzes the dephosphorylation of undecaprenyl diphosphate (UPP). Confers resistance to bacitracin.</text>
</comment>
<comment type="catalytic activity">
    <reaction evidence="1">
        <text>di-trans,octa-cis-undecaprenyl diphosphate + H2O = di-trans,octa-cis-undecaprenyl phosphate + phosphate + H(+)</text>
        <dbReference type="Rhea" id="RHEA:28094"/>
        <dbReference type="ChEBI" id="CHEBI:15377"/>
        <dbReference type="ChEBI" id="CHEBI:15378"/>
        <dbReference type="ChEBI" id="CHEBI:43474"/>
        <dbReference type="ChEBI" id="CHEBI:58405"/>
        <dbReference type="ChEBI" id="CHEBI:60392"/>
        <dbReference type="EC" id="3.6.1.27"/>
    </reaction>
</comment>
<comment type="subcellular location">
    <subcellularLocation>
        <location evidence="1">Cell membrane</location>
        <topology evidence="1">Multi-pass membrane protein</topology>
    </subcellularLocation>
</comment>
<comment type="miscellaneous">
    <text>Bacitracin is thought to be involved in the inhibition of peptidoglycan synthesis by sequestering undecaprenyl diphosphate, thereby reducing the pool of lipid carrier available.</text>
</comment>
<comment type="similarity">
    <text evidence="1">Belongs to the UppP family.</text>
</comment>
<reference key="1">
    <citation type="journal article" date="2009" name="PLoS Pathog.">
        <title>Genomic evidence for the evolution of Streptococcus equi: host restriction, increased virulence, and genetic exchange with human pathogens.</title>
        <authorList>
            <person name="Holden M.T.G."/>
            <person name="Heather Z."/>
            <person name="Paillot R."/>
            <person name="Steward K.F."/>
            <person name="Webb K."/>
            <person name="Ainslie F."/>
            <person name="Jourdan T."/>
            <person name="Bason N.C."/>
            <person name="Holroyd N.E."/>
            <person name="Mungall K."/>
            <person name="Quail M.A."/>
            <person name="Sanders M."/>
            <person name="Simmonds M."/>
            <person name="Willey D."/>
            <person name="Brooks K."/>
            <person name="Aanensen D.M."/>
            <person name="Spratt B.G."/>
            <person name="Jolley K.A."/>
            <person name="Maiden M.C.J."/>
            <person name="Kehoe M."/>
            <person name="Chanter N."/>
            <person name="Bentley S.D."/>
            <person name="Robinson C."/>
            <person name="Maskell D.J."/>
            <person name="Parkhill J."/>
            <person name="Waller A.S."/>
        </authorList>
    </citation>
    <scope>NUCLEOTIDE SEQUENCE [LARGE SCALE GENOMIC DNA]</scope>
    <source>
        <strain>4047</strain>
    </source>
</reference>
<evidence type="ECO:0000255" key="1">
    <source>
        <dbReference type="HAMAP-Rule" id="MF_01006"/>
    </source>
</evidence>
<dbReference type="EC" id="3.6.1.27" evidence="1"/>
<dbReference type="EMBL" id="FM204883">
    <property type="protein sequence ID" value="CAW95153.1"/>
    <property type="molecule type" value="Genomic_DNA"/>
</dbReference>
<dbReference type="RefSeq" id="WP_012680101.1">
    <property type="nucleotide sequence ID" value="NC_012471.1"/>
</dbReference>
<dbReference type="SMR" id="C0M8J5"/>
<dbReference type="KEGG" id="seu:SEQ_1933"/>
<dbReference type="HOGENOM" id="CLU_060296_2_0_9"/>
<dbReference type="OrthoDB" id="9808289at2"/>
<dbReference type="Proteomes" id="UP000001365">
    <property type="component" value="Chromosome"/>
</dbReference>
<dbReference type="GO" id="GO:0005886">
    <property type="term" value="C:plasma membrane"/>
    <property type="evidence" value="ECO:0007669"/>
    <property type="project" value="UniProtKB-SubCell"/>
</dbReference>
<dbReference type="GO" id="GO:0050380">
    <property type="term" value="F:undecaprenyl-diphosphatase activity"/>
    <property type="evidence" value="ECO:0007669"/>
    <property type="project" value="UniProtKB-UniRule"/>
</dbReference>
<dbReference type="GO" id="GO:0071555">
    <property type="term" value="P:cell wall organization"/>
    <property type="evidence" value="ECO:0007669"/>
    <property type="project" value="UniProtKB-KW"/>
</dbReference>
<dbReference type="GO" id="GO:0009252">
    <property type="term" value="P:peptidoglycan biosynthetic process"/>
    <property type="evidence" value="ECO:0007669"/>
    <property type="project" value="UniProtKB-KW"/>
</dbReference>
<dbReference type="GO" id="GO:0008360">
    <property type="term" value="P:regulation of cell shape"/>
    <property type="evidence" value="ECO:0007669"/>
    <property type="project" value="UniProtKB-KW"/>
</dbReference>
<dbReference type="GO" id="GO:0046677">
    <property type="term" value="P:response to antibiotic"/>
    <property type="evidence" value="ECO:0007669"/>
    <property type="project" value="UniProtKB-UniRule"/>
</dbReference>
<dbReference type="HAMAP" id="MF_01006">
    <property type="entry name" value="Undec_diphosphatase"/>
    <property type="match status" value="1"/>
</dbReference>
<dbReference type="InterPro" id="IPR003824">
    <property type="entry name" value="UppP"/>
</dbReference>
<dbReference type="NCBIfam" id="NF001391">
    <property type="entry name" value="PRK00281.1-5"/>
    <property type="match status" value="1"/>
</dbReference>
<dbReference type="PANTHER" id="PTHR30622">
    <property type="entry name" value="UNDECAPRENYL-DIPHOSPHATASE"/>
    <property type="match status" value="1"/>
</dbReference>
<dbReference type="PANTHER" id="PTHR30622:SF3">
    <property type="entry name" value="UNDECAPRENYL-DIPHOSPHATASE"/>
    <property type="match status" value="1"/>
</dbReference>
<dbReference type="Pfam" id="PF02673">
    <property type="entry name" value="BacA"/>
    <property type="match status" value="1"/>
</dbReference>
<gene>
    <name evidence="1" type="primary">uppP</name>
    <name type="ordered locus">SEQ_1933</name>
</gene>